<gene>
    <name evidence="1" type="primary">rplV</name>
    <name type="ordered locus">DNO_1270</name>
</gene>
<sequence>MQSIAKLRAARISAQKARLVADQIRGKHVNDAVEILTFSQKKAAAIILKVLNSAIANAENNEGADIDELHVAEIQVGEGMTMKRFRARAKGRGNRICKRTSNIFVRVQER</sequence>
<comment type="function">
    <text evidence="1">This protein binds specifically to 23S rRNA; its binding is stimulated by other ribosomal proteins, e.g. L4, L17, and L20. It is important during the early stages of 50S assembly. It makes multiple contacts with different domains of the 23S rRNA in the assembled 50S subunit and ribosome (By similarity).</text>
</comment>
<comment type="function">
    <text evidence="1">The globular domain of the protein is located near the polypeptide exit tunnel on the outside of the subunit, while an extended beta-hairpin is found that lines the wall of the exit tunnel in the center of the 70S ribosome.</text>
</comment>
<comment type="subunit">
    <text evidence="1">Part of the 50S ribosomal subunit.</text>
</comment>
<comment type="similarity">
    <text evidence="1">Belongs to the universal ribosomal protein uL22 family.</text>
</comment>
<reference key="1">
    <citation type="journal article" date="2007" name="Nat. Biotechnol.">
        <title>Genome sequence and identification of candidate vaccine antigens from the animal pathogen Dichelobacter nodosus.</title>
        <authorList>
            <person name="Myers G.S.A."/>
            <person name="Parker D."/>
            <person name="Al-Hasani K."/>
            <person name="Kennan R.M."/>
            <person name="Seemann T."/>
            <person name="Ren Q."/>
            <person name="Badger J.H."/>
            <person name="Selengut J.D."/>
            <person name="Deboy R.T."/>
            <person name="Tettelin H."/>
            <person name="Boyce J.D."/>
            <person name="McCarl V.P."/>
            <person name="Han X."/>
            <person name="Nelson W.C."/>
            <person name="Madupu R."/>
            <person name="Mohamoud Y."/>
            <person name="Holley T."/>
            <person name="Fedorova N."/>
            <person name="Khouri H."/>
            <person name="Bottomley S.P."/>
            <person name="Whittington R.J."/>
            <person name="Adler B."/>
            <person name="Songer J.G."/>
            <person name="Rood J.I."/>
            <person name="Paulsen I.T."/>
        </authorList>
    </citation>
    <scope>NUCLEOTIDE SEQUENCE [LARGE SCALE GENOMIC DNA]</scope>
    <source>
        <strain>VCS1703A</strain>
    </source>
</reference>
<feature type="chain" id="PRO_1000052567" description="Large ribosomal subunit protein uL22">
    <location>
        <begin position="1"/>
        <end position="110"/>
    </location>
</feature>
<evidence type="ECO:0000255" key="1">
    <source>
        <dbReference type="HAMAP-Rule" id="MF_01331"/>
    </source>
</evidence>
<evidence type="ECO:0000305" key="2"/>
<organism>
    <name type="scientific">Dichelobacter nodosus (strain VCS1703A)</name>
    <dbReference type="NCBI Taxonomy" id="246195"/>
    <lineage>
        <taxon>Bacteria</taxon>
        <taxon>Pseudomonadati</taxon>
        <taxon>Pseudomonadota</taxon>
        <taxon>Gammaproteobacteria</taxon>
        <taxon>Cardiobacteriales</taxon>
        <taxon>Cardiobacteriaceae</taxon>
        <taxon>Dichelobacter</taxon>
    </lineage>
</organism>
<name>RL22_DICNV</name>
<accession>A5EX77</accession>
<keyword id="KW-1185">Reference proteome</keyword>
<keyword id="KW-0687">Ribonucleoprotein</keyword>
<keyword id="KW-0689">Ribosomal protein</keyword>
<keyword id="KW-0694">RNA-binding</keyword>
<keyword id="KW-0699">rRNA-binding</keyword>
<dbReference type="EMBL" id="CP000513">
    <property type="protein sequence ID" value="ABQ13807.1"/>
    <property type="molecule type" value="Genomic_DNA"/>
</dbReference>
<dbReference type="RefSeq" id="WP_012031565.1">
    <property type="nucleotide sequence ID" value="NC_009446.1"/>
</dbReference>
<dbReference type="SMR" id="A5EX77"/>
<dbReference type="STRING" id="246195.DNO_1270"/>
<dbReference type="KEGG" id="dno:DNO_1270"/>
<dbReference type="eggNOG" id="COG0091">
    <property type="taxonomic scope" value="Bacteria"/>
</dbReference>
<dbReference type="HOGENOM" id="CLU_083987_3_3_6"/>
<dbReference type="OrthoDB" id="9805969at2"/>
<dbReference type="Proteomes" id="UP000000248">
    <property type="component" value="Chromosome"/>
</dbReference>
<dbReference type="GO" id="GO:0022625">
    <property type="term" value="C:cytosolic large ribosomal subunit"/>
    <property type="evidence" value="ECO:0007669"/>
    <property type="project" value="TreeGrafter"/>
</dbReference>
<dbReference type="GO" id="GO:0019843">
    <property type="term" value="F:rRNA binding"/>
    <property type="evidence" value="ECO:0007669"/>
    <property type="project" value="UniProtKB-UniRule"/>
</dbReference>
<dbReference type="GO" id="GO:0003735">
    <property type="term" value="F:structural constituent of ribosome"/>
    <property type="evidence" value="ECO:0007669"/>
    <property type="project" value="InterPro"/>
</dbReference>
<dbReference type="GO" id="GO:0006412">
    <property type="term" value="P:translation"/>
    <property type="evidence" value="ECO:0007669"/>
    <property type="project" value="UniProtKB-UniRule"/>
</dbReference>
<dbReference type="CDD" id="cd00336">
    <property type="entry name" value="Ribosomal_L22"/>
    <property type="match status" value="1"/>
</dbReference>
<dbReference type="FunFam" id="3.90.470.10:FF:000001">
    <property type="entry name" value="50S ribosomal protein L22"/>
    <property type="match status" value="1"/>
</dbReference>
<dbReference type="Gene3D" id="3.90.470.10">
    <property type="entry name" value="Ribosomal protein L22/L17"/>
    <property type="match status" value="1"/>
</dbReference>
<dbReference type="HAMAP" id="MF_01331_B">
    <property type="entry name" value="Ribosomal_uL22_B"/>
    <property type="match status" value="1"/>
</dbReference>
<dbReference type="InterPro" id="IPR001063">
    <property type="entry name" value="Ribosomal_uL22"/>
</dbReference>
<dbReference type="InterPro" id="IPR005727">
    <property type="entry name" value="Ribosomal_uL22_bac/chlpt-type"/>
</dbReference>
<dbReference type="InterPro" id="IPR047867">
    <property type="entry name" value="Ribosomal_uL22_bac/org-type"/>
</dbReference>
<dbReference type="InterPro" id="IPR018260">
    <property type="entry name" value="Ribosomal_uL22_CS"/>
</dbReference>
<dbReference type="InterPro" id="IPR036394">
    <property type="entry name" value="Ribosomal_uL22_sf"/>
</dbReference>
<dbReference type="NCBIfam" id="TIGR01044">
    <property type="entry name" value="rplV_bact"/>
    <property type="match status" value="1"/>
</dbReference>
<dbReference type="PANTHER" id="PTHR13501">
    <property type="entry name" value="CHLOROPLAST 50S RIBOSOMAL PROTEIN L22-RELATED"/>
    <property type="match status" value="1"/>
</dbReference>
<dbReference type="PANTHER" id="PTHR13501:SF8">
    <property type="entry name" value="LARGE RIBOSOMAL SUBUNIT PROTEIN UL22M"/>
    <property type="match status" value="1"/>
</dbReference>
<dbReference type="Pfam" id="PF00237">
    <property type="entry name" value="Ribosomal_L22"/>
    <property type="match status" value="1"/>
</dbReference>
<dbReference type="SUPFAM" id="SSF54843">
    <property type="entry name" value="Ribosomal protein L22"/>
    <property type="match status" value="1"/>
</dbReference>
<dbReference type="PROSITE" id="PS00464">
    <property type="entry name" value="RIBOSOMAL_L22"/>
    <property type="match status" value="1"/>
</dbReference>
<protein>
    <recommendedName>
        <fullName evidence="1">Large ribosomal subunit protein uL22</fullName>
    </recommendedName>
    <alternativeName>
        <fullName evidence="2">50S ribosomal protein L22</fullName>
    </alternativeName>
</protein>
<proteinExistence type="inferred from homology"/>